<comment type="function">
    <text evidence="1">Catalyzes the irreversible NADPH-dependent deamination of GMP to IMP. It functions in the conversion of nucleobase, nucleoside and nucleotide derivatives of G to A nucleotides, and in maintaining the intracellular balance of A and G nucleotides.</text>
</comment>
<comment type="catalytic activity">
    <reaction evidence="1">
        <text>IMP + NH4(+) + NADP(+) = GMP + NADPH + 2 H(+)</text>
        <dbReference type="Rhea" id="RHEA:17185"/>
        <dbReference type="ChEBI" id="CHEBI:15378"/>
        <dbReference type="ChEBI" id="CHEBI:28938"/>
        <dbReference type="ChEBI" id="CHEBI:57783"/>
        <dbReference type="ChEBI" id="CHEBI:58053"/>
        <dbReference type="ChEBI" id="CHEBI:58115"/>
        <dbReference type="ChEBI" id="CHEBI:58349"/>
        <dbReference type="EC" id="1.7.1.7"/>
    </reaction>
</comment>
<comment type="similarity">
    <text evidence="1">Belongs to the IMPDH/GMPR family. GuaC type 2 subfamily.</text>
</comment>
<sequence length="328" mass="35883">MLNEFPIFDYEDIQLIPNKCVIKSRAEADTSVTLGNHTFKLPVVPANMQTILDENVAEQLAKGGYFYIMHRFDEAGRIPFIKRMHDQGLIASISVGVKDYEYDFVSQLKADAPEYITIDIAHGHADSVISMIQHIKKELPDTFVIAGNVGTPEAVRELENAGADATKVGIGPGKVCITKVKTGFGTGGWQLAALRWCAKAARKPIIADGGIRTHGDIAKSIRFGASMIMIGSLFAGHIESPGKTIEVDGEQFKEYYGSASQYQKGAYKNVEGKRILLPAKGHLQDTLTEMEQDLQSAISYAGGRQVADLKHVDYVIVKNSIWNGDASH</sequence>
<reference key="1">
    <citation type="journal article" date="2001" name="J. Bacteriol.">
        <title>Genome of the bacterium Streptococcus pneumoniae strain R6.</title>
        <authorList>
            <person name="Hoskins J."/>
            <person name="Alborn W.E. Jr."/>
            <person name="Arnold J."/>
            <person name="Blaszczak L.C."/>
            <person name="Burgett S."/>
            <person name="DeHoff B.S."/>
            <person name="Estrem S.T."/>
            <person name="Fritz L."/>
            <person name="Fu D.-J."/>
            <person name="Fuller W."/>
            <person name="Geringer C."/>
            <person name="Gilmour R."/>
            <person name="Glass J.S."/>
            <person name="Khoja H."/>
            <person name="Kraft A.R."/>
            <person name="Lagace R.E."/>
            <person name="LeBlanc D.J."/>
            <person name="Lee L.N."/>
            <person name="Lefkowitz E.J."/>
            <person name="Lu J."/>
            <person name="Matsushima P."/>
            <person name="McAhren S.M."/>
            <person name="McHenney M."/>
            <person name="McLeaster K."/>
            <person name="Mundy C.W."/>
            <person name="Nicas T.I."/>
            <person name="Norris F.H."/>
            <person name="O'Gara M."/>
            <person name="Peery R.B."/>
            <person name="Robertson G.T."/>
            <person name="Rockey P."/>
            <person name="Sun P.-M."/>
            <person name="Winkler M.E."/>
            <person name="Yang Y."/>
            <person name="Young-Bellido M."/>
            <person name="Zhao G."/>
            <person name="Zook C.A."/>
            <person name="Baltz R.H."/>
            <person name="Jaskunas S.R."/>
            <person name="Rosteck P.R. Jr."/>
            <person name="Skatrud P.L."/>
            <person name="Glass J.I."/>
        </authorList>
    </citation>
    <scope>NUCLEOTIDE SEQUENCE [LARGE SCALE GENOMIC DNA]</scope>
    <source>
        <strain>ATCC BAA-255 / R6</strain>
    </source>
</reference>
<organism>
    <name type="scientific">Streptococcus pneumoniae (strain ATCC BAA-255 / R6)</name>
    <dbReference type="NCBI Taxonomy" id="171101"/>
    <lineage>
        <taxon>Bacteria</taxon>
        <taxon>Bacillati</taxon>
        <taxon>Bacillota</taxon>
        <taxon>Bacilli</taxon>
        <taxon>Lactobacillales</taxon>
        <taxon>Streptococcaceae</taxon>
        <taxon>Streptococcus</taxon>
    </lineage>
</organism>
<protein>
    <recommendedName>
        <fullName evidence="1">GMP reductase</fullName>
        <ecNumber evidence="1">1.7.1.7</ecNumber>
    </recommendedName>
    <alternativeName>
        <fullName evidence="1">Guanosine 5'-monophosphate oxidoreductase</fullName>
        <shortName evidence="1">Guanosine monophosphate reductase</shortName>
    </alternativeName>
</protein>
<name>GUAC_STRR6</name>
<accession>Q8DPJ7</accession>
<gene>
    <name evidence="1" type="primary">guaC</name>
    <name type="ordered locus">spr1128</name>
</gene>
<keyword id="KW-0521">NADP</keyword>
<keyword id="KW-0560">Oxidoreductase</keyword>
<keyword id="KW-1185">Reference proteome</keyword>
<feature type="chain" id="PRO_0000093776" description="GMP reductase">
    <location>
        <begin position="1"/>
        <end position="328"/>
    </location>
</feature>
<feature type="active site" description="Thioimidate intermediate" evidence="1">
    <location>
        <position position="176"/>
    </location>
</feature>
<feature type="binding site" evidence="1">
    <location>
        <begin position="205"/>
        <end position="228"/>
    </location>
    <ligand>
        <name>NADP(+)</name>
        <dbReference type="ChEBI" id="CHEBI:58349"/>
    </ligand>
</feature>
<proteinExistence type="inferred from homology"/>
<dbReference type="EC" id="1.7.1.7" evidence="1"/>
<dbReference type="EMBL" id="AE007317">
    <property type="protein sequence ID" value="AAK99931.1"/>
    <property type="molecule type" value="Genomic_DNA"/>
</dbReference>
<dbReference type="PIR" id="G98012">
    <property type="entry name" value="G98012"/>
</dbReference>
<dbReference type="RefSeq" id="NP_358721.1">
    <property type="nucleotide sequence ID" value="NC_003098.1"/>
</dbReference>
<dbReference type="RefSeq" id="WP_000931162.1">
    <property type="nucleotide sequence ID" value="NC_003098.1"/>
</dbReference>
<dbReference type="SMR" id="Q8DPJ7"/>
<dbReference type="STRING" id="171101.spr1128"/>
<dbReference type="KEGG" id="spr:spr1128"/>
<dbReference type="PATRIC" id="fig|171101.6.peg.1224"/>
<dbReference type="eggNOG" id="COG0516">
    <property type="taxonomic scope" value="Bacteria"/>
</dbReference>
<dbReference type="HOGENOM" id="CLU_022552_5_0_9"/>
<dbReference type="Proteomes" id="UP000000586">
    <property type="component" value="Chromosome"/>
</dbReference>
<dbReference type="GO" id="GO:1902560">
    <property type="term" value="C:GMP reductase complex"/>
    <property type="evidence" value="ECO:0007669"/>
    <property type="project" value="InterPro"/>
</dbReference>
<dbReference type="GO" id="GO:0003920">
    <property type="term" value="F:GMP reductase activity"/>
    <property type="evidence" value="ECO:0007669"/>
    <property type="project" value="UniProtKB-UniRule"/>
</dbReference>
<dbReference type="GO" id="GO:0006163">
    <property type="term" value="P:purine nucleotide metabolic process"/>
    <property type="evidence" value="ECO:0007669"/>
    <property type="project" value="UniProtKB-UniRule"/>
</dbReference>
<dbReference type="CDD" id="cd00381">
    <property type="entry name" value="IMPDH"/>
    <property type="match status" value="1"/>
</dbReference>
<dbReference type="FunFam" id="3.20.20.70:FF:000079">
    <property type="entry name" value="GMP reductase"/>
    <property type="match status" value="1"/>
</dbReference>
<dbReference type="Gene3D" id="3.20.20.70">
    <property type="entry name" value="Aldolase class I"/>
    <property type="match status" value="1"/>
</dbReference>
<dbReference type="HAMAP" id="MF_01511">
    <property type="entry name" value="GMP_reduct_type2"/>
    <property type="match status" value="1"/>
</dbReference>
<dbReference type="InterPro" id="IPR013785">
    <property type="entry name" value="Aldolase_TIM"/>
</dbReference>
<dbReference type="InterPro" id="IPR050139">
    <property type="entry name" value="GMP_reductase"/>
</dbReference>
<dbReference type="InterPro" id="IPR005994">
    <property type="entry name" value="GuaC_type_2"/>
</dbReference>
<dbReference type="InterPro" id="IPR015875">
    <property type="entry name" value="IMP_DH/GMP_Rdtase_CS"/>
</dbReference>
<dbReference type="InterPro" id="IPR001093">
    <property type="entry name" value="IMP_DH_GMPRt"/>
</dbReference>
<dbReference type="NCBIfam" id="TIGR01306">
    <property type="entry name" value="GMP_reduct_2"/>
    <property type="match status" value="1"/>
</dbReference>
<dbReference type="NCBIfam" id="NF003966">
    <property type="entry name" value="PRK05458.1"/>
    <property type="match status" value="1"/>
</dbReference>
<dbReference type="PANTHER" id="PTHR43170">
    <property type="entry name" value="GMP REDUCTASE"/>
    <property type="match status" value="1"/>
</dbReference>
<dbReference type="PANTHER" id="PTHR43170:SF5">
    <property type="entry name" value="GMP REDUCTASE"/>
    <property type="match status" value="1"/>
</dbReference>
<dbReference type="Pfam" id="PF00478">
    <property type="entry name" value="IMPDH"/>
    <property type="match status" value="1"/>
</dbReference>
<dbReference type="PIRSF" id="PIRSF036500">
    <property type="entry name" value="GMP_red_Firmic"/>
    <property type="match status" value="1"/>
</dbReference>
<dbReference type="SMART" id="SM01240">
    <property type="entry name" value="IMPDH"/>
    <property type="match status" value="1"/>
</dbReference>
<dbReference type="SUPFAM" id="SSF51412">
    <property type="entry name" value="Inosine monophosphate dehydrogenase (IMPDH)"/>
    <property type="match status" value="1"/>
</dbReference>
<dbReference type="PROSITE" id="PS00487">
    <property type="entry name" value="IMP_DH_GMP_RED"/>
    <property type="match status" value="1"/>
</dbReference>
<evidence type="ECO:0000255" key="1">
    <source>
        <dbReference type="HAMAP-Rule" id="MF_01511"/>
    </source>
</evidence>